<feature type="propeptide" id="PRO_0000355758" evidence="1">
    <location>
        <begin position="1"/>
        <end position="2"/>
    </location>
</feature>
<feature type="chain" id="PRO_0000355759" description="Ribulose bisphosphate carboxylase large chain">
    <location>
        <begin position="3"/>
        <end position="476"/>
    </location>
</feature>
<feature type="active site" description="Proton acceptor" evidence="1">
    <location>
        <position position="175"/>
    </location>
</feature>
<feature type="active site" description="Proton acceptor" evidence="1">
    <location>
        <position position="294"/>
    </location>
</feature>
<feature type="binding site" description="in homodimeric partner" evidence="1">
    <location>
        <position position="123"/>
    </location>
    <ligand>
        <name>substrate</name>
    </ligand>
</feature>
<feature type="binding site" evidence="1">
    <location>
        <position position="173"/>
    </location>
    <ligand>
        <name>substrate</name>
    </ligand>
</feature>
<feature type="binding site" evidence="1">
    <location>
        <position position="177"/>
    </location>
    <ligand>
        <name>substrate</name>
    </ligand>
</feature>
<feature type="binding site" description="via carbamate group" evidence="1">
    <location>
        <position position="201"/>
    </location>
    <ligand>
        <name>Mg(2+)</name>
        <dbReference type="ChEBI" id="CHEBI:18420"/>
    </ligand>
</feature>
<feature type="binding site" evidence="1">
    <location>
        <position position="203"/>
    </location>
    <ligand>
        <name>Mg(2+)</name>
        <dbReference type="ChEBI" id="CHEBI:18420"/>
    </ligand>
</feature>
<feature type="binding site" evidence="1">
    <location>
        <position position="204"/>
    </location>
    <ligand>
        <name>Mg(2+)</name>
        <dbReference type="ChEBI" id="CHEBI:18420"/>
    </ligand>
</feature>
<feature type="binding site" evidence="1">
    <location>
        <position position="295"/>
    </location>
    <ligand>
        <name>substrate</name>
    </ligand>
</feature>
<feature type="binding site" evidence="1">
    <location>
        <position position="327"/>
    </location>
    <ligand>
        <name>substrate</name>
    </ligand>
</feature>
<feature type="binding site" evidence="1">
    <location>
        <position position="379"/>
    </location>
    <ligand>
        <name>substrate</name>
    </ligand>
</feature>
<feature type="site" description="Transition state stabilizer" evidence="1">
    <location>
        <position position="334"/>
    </location>
</feature>
<feature type="modified residue" description="N-acetylproline" evidence="1">
    <location>
        <position position="3"/>
    </location>
</feature>
<feature type="modified residue" description="N6,N6,N6-trimethyllysine" evidence="1">
    <location>
        <position position="14"/>
    </location>
</feature>
<feature type="modified residue" description="N6-carboxylysine" evidence="1">
    <location>
        <position position="201"/>
    </location>
</feature>
<feature type="disulfide bond" description="Interchain; in linked form" evidence="1">
    <location>
        <position position="247"/>
    </location>
</feature>
<proteinExistence type="inferred from homology"/>
<name>RBL_BRADI</name>
<accession>B3TN59</accession>
<comment type="function">
    <text evidence="1">RuBisCO catalyzes two reactions: the carboxylation of D-ribulose 1,5-bisphosphate, the primary event in carbon dioxide fixation, as well as the oxidative fragmentation of the pentose substrate in the photorespiration process. Both reactions occur simultaneously and in competition at the same active site.</text>
</comment>
<comment type="catalytic activity">
    <reaction evidence="1">
        <text>2 (2R)-3-phosphoglycerate + 2 H(+) = D-ribulose 1,5-bisphosphate + CO2 + H2O</text>
        <dbReference type="Rhea" id="RHEA:23124"/>
        <dbReference type="ChEBI" id="CHEBI:15377"/>
        <dbReference type="ChEBI" id="CHEBI:15378"/>
        <dbReference type="ChEBI" id="CHEBI:16526"/>
        <dbReference type="ChEBI" id="CHEBI:57870"/>
        <dbReference type="ChEBI" id="CHEBI:58272"/>
        <dbReference type="EC" id="4.1.1.39"/>
    </reaction>
</comment>
<comment type="catalytic activity">
    <reaction evidence="1">
        <text>D-ribulose 1,5-bisphosphate + O2 = 2-phosphoglycolate + (2R)-3-phosphoglycerate + 2 H(+)</text>
        <dbReference type="Rhea" id="RHEA:36631"/>
        <dbReference type="ChEBI" id="CHEBI:15378"/>
        <dbReference type="ChEBI" id="CHEBI:15379"/>
        <dbReference type="ChEBI" id="CHEBI:57870"/>
        <dbReference type="ChEBI" id="CHEBI:58033"/>
        <dbReference type="ChEBI" id="CHEBI:58272"/>
    </reaction>
</comment>
<comment type="cofactor">
    <cofactor evidence="1">
        <name>Mg(2+)</name>
        <dbReference type="ChEBI" id="CHEBI:18420"/>
    </cofactor>
    <text evidence="1">Binds 1 Mg(2+) ion per subunit.</text>
</comment>
<comment type="subunit">
    <text evidence="1">Heterohexadecamer of 8 large chains and 8 small chains; disulfide-linked. The disulfide link is formed within the large subunit homodimers.</text>
</comment>
<comment type="subcellular location">
    <subcellularLocation>
        <location>Plastid</location>
        <location>Chloroplast</location>
    </subcellularLocation>
</comment>
<comment type="PTM">
    <text evidence="1">The disulfide bond which can form in the large chain dimeric partners within the hexadecamer appears to be associated with oxidative stress and protein turnover.</text>
</comment>
<comment type="miscellaneous">
    <text evidence="1">The basic functional RuBisCO is composed of a large chain homodimer in a 'head-to-tail' conformation. In form I RuBisCO this homodimer is arranged in a barrel-like tetramer with the small subunits forming a tetrameric 'cap' on each end of the 'barrel'.</text>
</comment>
<comment type="similarity">
    <text evidence="1">Belongs to the RuBisCO large chain family. Type I subfamily.</text>
</comment>
<dbReference type="EC" id="4.1.1.39" evidence="1"/>
<dbReference type="EMBL" id="EU325680">
    <property type="protein sequence ID" value="ACF08648.1"/>
    <property type="molecule type" value="Genomic_DNA"/>
</dbReference>
<dbReference type="RefSeq" id="YP_002000495.1">
    <property type="nucleotide sequence ID" value="NC_011032.1"/>
</dbReference>
<dbReference type="SMR" id="B3TN59"/>
<dbReference type="FunCoup" id="B3TN59">
    <property type="interactions" value="488"/>
</dbReference>
<dbReference type="STRING" id="15368.B3TN59"/>
<dbReference type="EnsemblPlants" id="KQK18174">
    <property type="protein sequence ID" value="KQK18174"/>
    <property type="gene ID" value="BRADI_1g39206v3"/>
</dbReference>
<dbReference type="GeneID" id="6439897"/>
<dbReference type="Gramene" id="KQK18174">
    <property type="protein sequence ID" value="KQK18174"/>
    <property type="gene ID" value="BRADI_1g39206v3"/>
</dbReference>
<dbReference type="KEGG" id="bdi:6439897"/>
<dbReference type="eggNOG" id="ENOG502QTI9">
    <property type="taxonomic scope" value="Eukaryota"/>
</dbReference>
<dbReference type="InParanoid" id="B3TN59"/>
<dbReference type="Proteomes" id="UP000008810">
    <property type="component" value="Unplaced"/>
</dbReference>
<dbReference type="ExpressionAtlas" id="B3TN59">
    <property type="expression patterns" value="differential"/>
</dbReference>
<dbReference type="GO" id="GO:0009507">
    <property type="term" value="C:chloroplast"/>
    <property type="evidence" value="ECO:0007669"/>
    <property type="project" value="UniProtKB-SubCell"/>
</dbReference>
<dbReference type="GO" id="GO:0000287">
    <property type="term" value="F:magnesium ion binding"/>
    <property type="evidence" value="ECO:0007669"/>
    <property type="project" value="UniProtKB-UniRule"/>
</dbReference>
<dbReference type="GO" id="GO:0004497">
    <property type="term" value="F:monooxygenase activity"/>
    <property type="evidence" value="ECO:0007669"/>
    <property type="project" value="UniProtKB-KW"/>
</dbReference>
<dbReference type="GO" id="GO:0016984">
    <property type="term" value="F:ribulose-bisphosphate carboxylase activity"/>
    <property type="evidence" value="ECO:0007669"/>
    <property type="project" value="UniProtKB-UniRule"/>
</dbReference>
<dbReference type="GO" id="GO:0009853">
    <property type="term" value="P:photorespiration"/>
    <property type="evidence" value="ECO:0007669"/>
    <property type="project" value="UniProtKB-KW"/>
</dbReference>
<dbReference type="GO" id="GO:0019253">
    <property type="term" value="P:reductive pentose-phosphate cycle"/>
    <property type="evidence" value="ECO:0007669"/>
    <property type="project" value="UniProtKB-UniRule"/>
</dbReference>
<dbReference type="CDD" id="cd08212">
    <property type="entry name" value="RuBisCO_large_I"/>
    <property type="match status" value="1"/>
</dbReference>
<dbReference type="FunFam" id="3.20.20.110:FF:000001">
    <property type="entry name" value="Ribulose bisphosphate carboxylase large chain"/>
    <property type="match status" value="1"/>
</dbReference>
<dbReference type="FunFam" id="3.30.70.150:FF:000001">
    <property type="entry name" value="Ribulose bisphosphate carboxylase large chain"/>
    <property type="match status" value="1"/>
</dbReference>
<dbReference type="Gene3D" id="3.20.20.110">
    <property type="entry name" value="Ribulose bisphosphate carboxylase, large subunit, C-terminal domain"/>
    <property type="match status" value="1"/>
</dbReference>
<dbReference type="Gene3D" id="3.30.70.150">
    <property type="entry name" value="RuBisCO large subunit, N-terminal domain"/>
    <property type="match status" value="1"/>
</dbReference>
<dbReference type="HAMAP" id="MF_01338">
    <property type="entry name" value="RuBisCO_L_type1"/>
    <property type="match status" value="1"/>
</dbReference>
<dbReference type="InterPro" id="IPR033966">
    <property type="entry name" value="RuBisCO"/>
</dbReference>
<dbReference type="InterPro" id="IPR020878">
    <property type="entry name" value="RuBisCo_large_chain_AS"/>
</dbReference>
<dbReference type="InterPro" id="IPR000685">
    <property type="entry name" value="RuBisCO_lsu_C"/>
</dbReference>
<dbReference type="InterPro" id="IPR036376">
    <property type="entry name" value="RuBisCO_lsu_C_sf"/>
</dbReference>
<dbReference type="InterPro" id="IPR017443">
    <property type="entry name" value="RuBisCO_lsu_fd_N"/>
</dbReference>
<dbReference type="InterPro" id="IPR036422">
    <property type="entry name" value="RuBisCO_lsu_N_sf"/>
</dbReference>
<dbReference type="InterPro" id="IPR020888">
    <property type="entry name" value="RuBisCO_lsuI"/>
</dbReference>
<dbReference type="NCBIfam" id="NF003252">
    <property type="entry name" value="PRK04208.1"/>
    <property type="match status" value="1"/>
</dbReference>
<dbReference type="PANTHER" id="PTHR42704">
    <property type="entry name" value="RIBULOSE BISPHOSPHATE CARBOXYLASE"/>
    <property type="match status" value="1"/>
</dbReference>
<dbReference type="PANTHER" id="PTHR42704:SF16">
    <property type="entry name" value="RIBULOSE BISPHOSPHATE CARBOXYLASE LARGE CHAIN"/>
    <property type="match status" value="1"/>
</dbReference>
<dbReference type="Pfam" id="PF00016">
    <property type="entry name" value="RuBisCO_large"/>
    <property type="match status" value="1"/>
</dbReference>
<dbReference type="Pfam" id="PF02788">
    <property type="entry name" value="RuBisCO_large_N"/>
    <property type="match status" value="1"/>
</dbReference>
<dbReference type="SFLD" id="SFLDG01052">
    <property type="entry name" value="RuBisCO"/>
    <property type="match status" value="1"/>
</dbReference>
<dbReference type="SFLD" id="SFLDS00014">
    <property type="entry name" value="RuBisCO"/>
    <property type="match status" value="1"/>
</dbReference>
<dbReference type="SFLD" id="SFLDG00301">
    <property type="entry name" value="RuBisCO-like_proteins"/>
    <property type="match status" value="1"/>
</dbReference>
<dbReference type="SUPFAM" id="SSF51649">
    <property type="entry name" value="RuBisCo, C-terminal domain"/>
    <property type="match status" value="1"/>
</dbReference>
<dbReference type="SUPFAM" id="SSF54966">
    <property type="entry name" value="RuBisCO, large subunit, small (N-terminal) domain"/>
    <property type="match status" value="1"/>
</dbReference>
<dbReference type="PROSITE" id="PS00157">
    <property type="entry name" value="RUBISCO_LARGE"/>
    <property type="match status" value="1"/>
</dbReference>
<reference key="1">
    <citation type="journal article" date="2008" name="BMC Res. Notes">
        <title>The complete chloroplast genome sequence of Brachypodium distachyon: sequence comparison and phylogenetic analysis of eight grass plastomes.</title>
        <authorList>
            <person name="Bortiri E."/>
            <person name="Coleman-Derr D."/>
            <person name="Lazo G.R."/>
            <person name="Anderson O.D."/>
            <person name="Gu Y.Q."/>
        </authorList>
    </citation>
    <scope>NUCLEOTIDE SEQUENCE [LARGE SCALE GENOMIC DNA]</scope>
    <source>
        <strain>cv. Bd21</strain>
    </source>
</reference>
<gene>
    <name evidence="1" type="primary">rbcL</name>
</gene>
<organism>
    <name type="scientific">Brachypodium distachyon</name>
    <name type="common">Purple false brome</name>
    <name type="synonym">Trachynia distachya</name>
    <dbReference type="NCBI Taxonomy" id="15368"/>
    <lineage>
        <taxon>Eukaryota</taxon>
        <taxon>Viridiplantae</taxon>
        <taxon>Streptophyta</taxon>
        <taxon>Embryophyta</taxon>
        <taxon>Tracheophyta</taxon>
        <taxon>Spermatophyta</taxon>
        <taxon>Magnoliopsida</taxon>
        <taxon>Liliopsida</taxon>
        <taxon>Poales</taxon>
        <taxon>Poaceae</taxon>
        <taxon>BOP clade</taxon>
        <taxon>Pooideae</taxon>
        <taxon>Stipodae</taxon>
        <taxon>Brachypodieae</taxon>
        <taxon>Brachypodium</taxon>
    </lineage>
</organism>
<evidence type="ECO:0000255" key="1">
    <source>
        <dbReference type="HAMAP-Rule" id="MF_01338"/>
    </source>
</evidence>
<keyword id="KW-0007">Acetylation</keyword>
<keyword id="KW-0113">Calvin cycle</keyword>
<keyword id="KW-0120">Carbon dioxide fixation</keyword>
<keyword id="KW-0150">Chloroplast</keyword>
<keyword id="KW-1015">Disulfide bond</keyword>
<keyword id="KW-0456">Lyase</keyword>
<keyword id="KW-0460">Magnesium</keyword>
<keyword id="KW-0479">Metal-binding</keyword>
<keyword id="KW-0488">Methylation</keyword>
<keyword id="KW-0503">Monooxygenase</keyword>
<keyword id="KW-0560">Oxidoreductase</keyword>
<keyword id="KW-0601">Photorespiration</keyword>
<keyword id="KW-0602">Photosynthesis</keyword>
<keyword id="KW-0934">Plastid</keyword>
<keyword id="KW-1185">Reference proteome</keyword>
<sequence length="476" mass="52733">MSPQTETKASVGFKAGVKDYRLTYYTPEYETKDTDILAAFRVSPQPGVPPEEAGAAVAAESSTGTWTTVWTDGLTSLDRYKGRCYHIEPVPGEDSQWICYVAYPLDLFEEGSVTNMFTSIVGNVFGFKALRALRLEDLRIPPTYSKTFQGPPHGIQVERDKLNKYGRPLLGCTIKPKLGLSAKNYGRACYECLRGGLDFTKDDENVNSQPFMRWRDRFVFCAEAIYKSQAETGEIKGHYLNATAGTCEEMMKRAVFARELGVPIVMHDYLTGGFTANTTLAHYCRDNGLLLHIHRAMHAVIDRQKNHGMHFRVLAKALRMSGGDHIHAGTVVGKLEGEREITLGFVDLLRDDFIEKDRARGIFFTQDWVSMPGVIPVASGGIHVWHMPALTEIFGDDSVLQFGGGTLGHPWGNAPGAAANRVALEACVQARNEGRDLAREGNEIIRAACKWSPELAAACEVWKAIKFEFAPVDTID</sequence>
<protein>
    <recommendedName>
        <fullName evidence="1">Ribulose bisphosphate carboxylase large chain</fullName>
        <shortName evidence="1">RuBisCO large subunit</shortName>
        <ecNumber evidence="1">4.1.1.39</ecNumber>
    </recommendedName>
</protein>
<geneLocation type="chloroplast"/>